<feature type="chain" id="PRO_0000030159" description="S-adenosylmethionine decarboxylase beta chain" evidence="1">
    <location>
        <begin position="1"/>
        <end position="63"/>
    </location>
</feature>
<feature type="chain" id="PRO_0000030160" description="S-adenosylmethionine decarboxylase alpha chain" evidence="1">
    <location>
        <begin position="64"/>
        <end position="130"/>
    </location>
</feature>
<feature type="active site" description="Schiff-base intermediate with substrate; via pyruvic acid" evidence="1">
    <location>
        <position position="64"/>
    </location>
</feature>
<feature type="active site" description="Proton acceptor; for processing activity" evidence="1">
    <location>
        <position position="69"/>
    </location>
</feature>
<feature type="active site" description="Proton donor; for catalytic activity" evidence="1">
    <location>
        <position position="84"/>
    </location>
</feature>
<feature type="site" description="Cleavage (non-hydrolytic); by autolysis" evidence="1">
    <location>
        <begin position="63"/>
        <end position="64"/>
    </location>
</feature>
<feature type="modified residue" description="Pyruvic acid (Ser); by autocatalysis" evidence="1">
    <location>
        <position position="64"/>
    </location>
</feature>
<reference key="1">
    <citation type="journal article" date="2000" name="Proc. Natl. Acad. Sci. U.S.A.">
        <title>Archaeal adaptation to higher temperatures revealed by genomic sequence of Thermoplasma volcanium.</title>
        <authorList>
            <person name="Kawashima T."/>
            <person name="Amano N."/>
            <person name="Koike H."/>
            <person name="Makino S."/>
            <person name="Higuchi S."/>
            <person name="Kawashima-Ohya Y."/>
            <person name="Watanabe K."/>
            <person name="Yamazaki M."/>
            <person name="Kanehori K."/>
            <person name="Kawamoto T."/>
            <person name="Nunoshiba T."/>
            <person name="Yamamoto Y."/>
            <person name="Aramaki H."/>
            <person name="Makino K."/>
            <person name="Suzuki M."/>
        </authorList>
    </citation>
    <scope>NUCLEOTIDE SEQUENCE [LARGE SCALE GENOMIC DNA]</scope>
    <source>
        <strain>ATCC 51530 / DSM 4299 / JCM 9571 / NBRC 15438 / GSS1</strain>
    </source>
</reference>
<name>SPEH_THEVO</name>
<accession>Q97BP8</accession>
<evidence type="ECO:0000255" key="1">
    <source>
        <dbReference type="HAMAP-Rule" id="MF_00464"/>
    </source>
</evidence>
<protein>
    <recommendedName>
        <fullName evidence="1">S-adenosylmethionine decarboxylase proenzyme</fullName>
        <shortName evidence="1">AdoMetDC</shortName>
        <shortName evidence="1">SAMDC</shortName>
        <ecNumber evidence="1">4.1.1.50</ecNumber>
    </recommendedName>
    <component>
        <recommendedName>
            <fullName evidence="1">S-adenosylmethionine decarboxylase beta chain</fullName>
        </recommendedName>
    </component>
    <component>
        <recommendedName>
            <fullName evidence="1">S-adenosylmethionine decarboxylase alpha chain</fullName>
        </recommendedName>
    </component>
</protein>
<dbReference type="EC" id="4.1.1.50" evidence="1"/>
<dbReference type="EMBL" id="BA000011">
    <property type="protein sequence ID" value="BAB59549.1"/>
    <property type="molecule type" value="Genomic_DNA"/>
</dbReference>
<dbReference type="RefSeq" id="WP_010916663.1">
    <property type="nucleotide sequence ID" value="NC_002689.2"/>
</dbReference>
<dbReference type="SMR" id="Q97BP8"/>
<dbReference type="STRING" id="273116.gene:9381185"/>
<dbReference type="PaxDb" id="273116-14324622"/>
<dbReference type="GeneID" id="1440921"/>
<dbReference type="KEGG" id="tvo:TVG0395474"/>
<dbReference type="eggNOG" id="arCOG00279">
    <property type="taxonomic scope" value="Archaea"/>
</dbReference>
<dbReference type="HOGENOM" id="CLU_125470_2_3_2"/>
<dbReference type="OrthoDB" id="114016at2157"/>
<dbReference type="PhylomeDB" id="Q97BP8"/>
<dbReference type="UniPathway" id="UPA00331">
    <property type="reaction ID" value="UER00451"/>
</dbReference>
<dbReference type="Proteomes" id="UP000001017">
    <property type="component" value="Chromosome"/>
</dbReference>
<dbReference type="GO" id="GO:0005829">
    <property type="term" value="C:cytosol"/>
    <property type="evidence" value="ECO:0007669"/>
    <property type="project" value="TreeGrafter"/>
</dbReference>
<dbReference type="GO" id="GO:0004014">
    <property type="term" value="F:adenosylmethionine decarboxylase activity"/>
    <property type="evidence" value="ECO:0007669"/>
    <property type="project" value="UniProtKB-UniRule"/>
</dbReference>
<dbReference type="GO" id="GO:0008295">
    <property type="term" value="P:spermidine biosynthetic process"/>
    <property type="evidence" value="ECO:0007669"/>
    <property type="project" value="UniProtKB-UniRule"/>
</dbReference>
<dbReference type="Gene3D" id="3.60.90.10">
    <property type="entry name" value="S-adenosylmethionine decarboxylase"/>
    <property type="match status" value="1"/>
</dbReference>
<dbReference type="HAMAP" id="MF_00464">
    <property type="entry name" value="AdoMetDC_1"/>
    <property type="match status" value="1"/>
</dbReference>
<dbReference type="InterPro" id="IPR003826">
    <property type="entry name" value="AdoMetDC_fam_prok"/>
</dbReference>
<dbReference type="InterPro" id="IPR016067">
    <property type="entry name" value="S-AdoMet_deCO2ase_core"/>
</dbReference>
<dbReference type="InterPro" id="IPR017716">
    <property type="entry name" value="S-AdoMet_deCOase_pro-enz"/>
</dbReference>
<dbReference type="NCBIfam" id="TIGR03330">
    <property type="entry name" value="SAM_DCase_Bsu"/>
    <property type="match status" value="1"/>
</dbReference>
<dbReference type="PANTHER" id="PTHR33866">
    <property type="entry name" value="S-ADENOSYLMETHIONINE DECARBOXYLASE PROENZYME"/>
    <property type="match status" value="1"/>
</dbReference>
<dbReference type="PANTHER" id="PTHR33866:SF2">
    <property type="entry name" value="S-ADENOSYLMETHIONINE DECARBOXYLASE PROENZYME"/>
    <property type="match status" value="1"/>
</dbReference>
<dbReference type="Pfam" id="PF02675">
    <property type="entry name" value="AdoMet_dc"/>
    <property type="match status" value="1"/>
</dbReference>
<dbReference type="SUPFAM" id="SSF56276">
    <property type="entry name" value="S-adenosylmethionine decarboxylase"/>
    <property type="match status" value="1"/>
</dbReference>
<organism>
    <name type="scientific">Thermoplasma volcanium (strain ATCC 51530 / DSM 4299 / JCM 9571 / NBRC 15438 / GSS1)</name>
    <dbReference type="NCBI Taxonomy" id="273116"/>
    <lineage>
        <taxon>Archaea</taxon>
        <taxon>Methanobacteriati</taxon>
        <taxon>Thermoplasmatota</taxon>
        <taxon>Thermoplasmata</taxon>
        <taxon>Thermoplasmatales</taxon>
        <taxon>Thermoplasmataceae</taxon>
        <taxon>Thermoplasma</taxon>
    </lineage>
</organism>
<sequence length="130" mass="14561">MKVGVGIHIIADFYGVDSKLISTTERMYPIIEGAVKYGRLTKISSDYYQFRPQGASGVVLLAESHLSFHTWPEYGLVTLDIYTCGDPKTADDAFEYLTRELKPTSVTTRKIVRGDLVGEEGLNEMQVEIH</sequence>
<keyword id="KW-0068">Autocatalytic cleavage</keyword>
<keyword id="KW-0210">Decarboxylase</keyword>
<keyword id="KW-0456">Lyase</keyword>
<keyword id="KW-0620">Polyamine biosynthesis</keyword>
<keyword id="KW-0670">Pyruvate</keyword>
<keyword id="KW-0949">S-adenosyl-L-methionine</keyword>
<keyword id="KW-0704">Schiff base</keyword>
<keyword id="KW-0745">Spermidine biosynthesis</keyword>
<keyword id="KW-0865">Zymogen</keyword>
<proteinExistence type="inferred from homology"/>
<comment type="function">
    <text evidence="1">Catalyzes the decarboxylation of S-adenosylmethionine to S-adenosylmethioninamine (dcAdoMet), the propylamine donor required for the synthesis of the polyamines spermine and spermidine from the diamine putrescine.</text>
</comment>
<comment type="catalytic activity">
    <reaction evidence="1">
        <text>S-adenosyl-L-methionine + H(+) = S-adenosyl 3-(methylsulfanyl)propylamine + CO2</text>
        <dbReference type="Rhea" id="RHEA:15981"/>
        <dbReference type="ChEBI" id="CHEBI:15378"/>
        <dbReference type="ChEBI" id="CHEBI:16526"/>
        <dbReference type="ChEBI" id="CHEBI:57443"/>
        <dbReference type="ChEBI" id="CHEBI:59789"/>
        <dbReference type="EC" id="4.1.1.50"/>
    </reaction>
</comment>
<comment type="cofactor">
    <cofactor evidence="1">
        <name>pyruvate</name>
        <dbReference type="ChEBI" id="CHEBI:15361"/>
    </cofactor>
    <text evidence="1">Binds 1 pyruvoyl group covalently per subunit.</text>
</comment>
<comment type="pathway">
    <text evidence="1">Amine and polyamine biosynthesis; S-adenosylmethioninamine biosynthesis; S-adenosylmethioninamine from S-adenosyl-L-methionine: step 1/1.</text>
</comment>
<comment type="subunit">
    <text evidence="1">Heterotetramer of two alpha and two beta chains arranged as a dimer of alpha/beta heterodimers.</text>
</comment>
<comment type="PTM">
    <text evidence="1">Is synthesized initially as an inactive proenzyme. Formation of the active enzyme involves a self-maturation process in which the active site pyruvoyl group is generated from an internal serine residue via an autocatalytic post-translational modification. Two non-identical subunits are generated from the proenzyme in this reaction, and the pyruvate is formed at the N-terminus of the alpha chain, which is derived from the carboxyl end of the proenzyme. The post-translation cleavage follows an unusual pathway, termed non-hydrolytic serinolysis, in which the side chain hydroxyl group of the serine supplies its oxygen atom to form the C-terminus of the beta chain, while the remainder of the serine residue undergoes an oxidative deamination to produce ammonia and the pyruvoyl group blocking the N-terminus of the alpha chain.</text>
</comment>
<comment type="similarity">
    <text evidence="1">Belongs to the prokaryotic AdoMetDC family. Type 1 subfamily.</text>
</comment>
<gene>
    <name evidence="1" type="primary">speH</name>
    <name type="ordered locus">TV0407</name>
    <name type="ORF">TVG0395474</name>
</gene>